<feature type="chain" id="PRO_0000170022" description="LexA repressor">
    <location>
        <begin position="1"/>
        <end position="215"/>
    </location>
</feature>
<feature type="DNA-binding region" description="H-T-H motif" evidence="1">
    <location>
        <begin position="28"/>
        <end position="48"/>
    </location>
</feature>
<feature type="active site" description="For autocatalytic cleavage activity" evidence="1">
    <location>
        <position position="133"/>
    </location>
</feature>
<feature type="active site" description="For autocatalytic cleavage activity" evidence="1">
    <location>
        <position position="170"/>
    </location>
</feature>
<feature type="site" description="Cleavage; by autolysis" evidence="1">
    <location>
        <begin position="98"/>
        <end position="99"/>
    </location>
</feature>
<gene>
    <name evidence="1" type="primary">lexA</name>
    <name type="ordered locus">BPSL1840</name>
</gene>
<protein>
    <recommendedName>
        <fullName evidence="1">LexA repressor</fullName>
        <ecNumber evidence="1">3.4.21.88</ecNumber>
    </recommendedName>
</protein>
<proteinExistence type="inferred from homology"/>
<evidence type="ECO:0000255" key="1">
    <source>
        <dbReference type="HAMAP-Rule" id="MF_00015"/>
    </source>
</evidence>
<sequence length="215" mass="23199">MIKLTARQQQVFDLIRRAIERSGFPPTRAEIAAELGFSSPNAAEEHLRALARKGVIELAAGASRGIRLLGIDDAPHQLTLPHAALMQLSLPLVGRVAAGSPILAQEHISQHYACDPALFSSKPDYLLKVRGLSMRDAGILDGDLLAVQKRTEAKDGQIIVARLGDDVTVKRLKRRPGGVELIAENPDYENIFVKAGSAEFALEGIAVGLIRPGEF</sequence>
<organism>
    <name type="scientific">Burkholderia pseudomallei (strain K96243)</name>
    <dbReference type="NCBI Taxonomy" id="272560"/>
    <lineage>
        <taxon>Bacteria</taxon>
        <taxon>Pseudomonadati</taxon>
        <taxon>Pseudomonadota</taxon>
        <taxon>Betaproteobacteria</taxon>
        <taxon>Burkholderiales</taxon>
        <taxon>Burkholderiaceae</taxon>
        <taxon>Burkholderia</taxon>
        <taxon>pseudomallei group</taxon>
    </lineage>
</organism>
<keyword id="KW-0068">Autocatalytic cleavage</keyword>
<keyword id="KW-0227">DNA damage</keyword>
<keyword id="KW-0234">DNA repair</keyword>
<keyword id="KW-0235">DNA replication</keyword>
<keyword id="KW-0238">DNA-binding</keyword>
<keyword id="KW-0378">Hydrolase</keyword>
<keyword id="KW-1185">Reference proteome</keyword>
<keyword id="KW-0678">Repressor</keyword>
<keyword id="KW-0742">SOS response</keyword>
<keyword id="KW-0804">Transcription</keyword>
<keyword id="KW-0805">Transcription regulation</keyword>
<accession>Q63TX7</accession>
<reference key="1">
    <citation type="journal article" date="2004" name="Proc. Natl. Acad. Sci. U.S.A.">
        <title>Genomic plasticity of the causative agent of melioidosis, Burkholderia pseudomallei.</title>
        <authorList>
            <person name="Holden M.T.G."/>
            <person name="Titball R.W."/>
            <person name="Peacock S.J."/>
            <person name="Cerdeno-Tarraga A.-M."/>
            <person name="Atkins T."/>
            <person name="Crossman L.C."/>
            <person name="Pitt T."/>
            <person name="Churcher C."/>
            <person name="Mungall K.L."/>
            <person name="Bentley S.D."/>
            <person name="Sebaihia M."/>
            <person name="Thomson N.R."/>
            <person name="Bason N."/>
            <person name="Beacham I.R."/>
            <person name="Brooks K."/>
            <person name="Brown K.A."/>
            <person name="Brown N.F."/>
            <person name="Challis G.L."/>
            <person name="Cherevach I."/>
            <person name="Chillingworth T."/>
            <person name="Cronin A."/>
            <person name="Crossett B."/>
            <person name="Davis P."/>
            <person name="DeShazer D."/>
            <person name="Feltwell T."/>
            <person name="Fraser A."/>
            <person name="Hance Z."/>
            <person name="Hauser H."/>
            <person name="Holroyd S."/>
            <person name="Jagels K."/>
            <person name="Keith K.E."/>
            <person name="Maddison M."/>
            <person name="Moule S."/>
            <person name="Price C."/>
            <person name="Quail M.A."/>
            <person name="Rabbinowitsch E."/>
            <person name="Rutherford K."/>
            <person name="Sanders M."/>
            <person name="Simmonds M."/>
            <person name="Songsivilai S."/>
            <person name="Stevens K."/>
            <person name="Tumapa S."/>
            <person name="Vesaratchavest M."/>
            <person name="Whitehead S."/>
            <person name="Yeats C."/>
            <person name="Barrell B.G."/>
            <person name="Oyston P.C.F."/>
            <person name="Parkhill J."/>
        </authorList>
    </citation>
    <scope>NUCLEOTIDE SEQUENCE [LARGE SCALE GENOMIC DNA]</scope>
    <source>
        <strain>K96243</strain>
    </source>
</reference>
<name>LEXA_BURPS</name>
<dbReference type="EC" id="3.4.21.88" evidence="1"/>
<dbReference type="EMBL" id="BX571965">
    <property type="protein sequence ID" value="CAH35839.1"/>
    <property type="molecule type" value="Genomic_DNA"/>
</dbReference>
<dbReference type="RefSeq" id="WP_004191638.1">
    <property type="nucleotide sequence ID" value="NZ_CP009538.1"/>
</dbReference>
<dbReference type="RefSeq" id="YP_108439.1">
    <property type="nucleotide sequence ID" value="NC_006350.1"/>
</dbReference>
<dbReference type="SMR" id="Q63TX7"/>
<dbReference type="STRING" id="272560.BPSL1840"/>
<dbReference type="MEROPS" id="S24.001"/>
<dbReference type="GeneID" id="93060159"/>
<dbReference type="KEGG" id="bps:BPSL1840"/>
<dbReference type="PATRIC" id="fig|272560.51.peg.3967"/>
<dbReference type="eggNOG" id="COG1974">
    <property type="taxonomic scope" value="Bacteria"/>
</dbReference>
<dbReference type="Proteomes" id="UP000000605">
    <property type="component" value="Chromosome 1"/>
</dbReference>
<dbReference type="GO" id="GO:0003677">
    <property type="term" value="F:DNA binding"/>
    <property type="evidence" value="ECO:0007669"/>
    <property type="project" value="UniProtKB-UniRule"/>
</dbReference>
<dbReference type="GO" id="GO:0004252">
    <property type="term" value="F:serine-type endopeptidase activity"/>
    <property type="evidence" value="ECO:0007669"/>
    <property type="project" value="UniProtKB-UniRule"/>
</dbReference>
<dbReference type="GO" id="GO:0006281">
    <property type="term" value="P:DNA repair"/>
    <property type="evidence" value="ECO:0007669"/>
    <property type="project" value="UniProtKB-UniRule"/>
</dbReference>
<dbReference type="GO" id="GO:0006260">
    <property type="term" value="P:DNA replication"/>
    <property type="evidence" value="ECO:0007669"/>
    <property type="project" value="UniProtKB-UniRule"/>
</dbReference>
<dbReference type="GO" id="GO:0045892">
    <property type="term" value="P:negative regulation of DNA-templated transcription"/>
    <property type="evidence" value="ECO:0007669"/>
    <property type="project" value="UniProtKB-UniRule"/>
</dbReference>
<dbReference type="GO" id="GO:0006508">
    <property type="term" value="P:proteolysis"/>
    <property type="evidence" value="ECO:0007669"/>
    <property type="project" value="InterPro"/>
</dbReference>
<dbReference type="GO" id="GO:0009432">
    <property type="term" value="P:SOS response"/>
    <property type="evidence" value="ECO:0007669"/>
    <property type="project" value="UniProtKB-UniRule"/>
</dbReference>
<dbReference type="CDD" id="cd06529">
    <property type="entry name" value="S24_LexA-like"/>
    <property type="match status" value="1"/>
</dbReference>
<dbReference type="FunFam" id="1.10.10.10:FF:000009">
    <property type="entry name" value="LexA repressor"/>
    <property type="match status" value="1"/>
</dbReference>
<dbReference type="FunFam" id="2.10.109.10:FF:000001">
    <property type="entry name" value="LexA repressor"/>
    <property type="match status" value="1"/>
</dbReference>
<dbReference type="Gene3D" id="2.10.109.10">
    <property type="entry name" value="Umud Fragment, subunit A"/>
    <property type="match status" value="1"/>
</dbReference>
<dbReference type="Gene3D" id="1.10.10.10">
    <property type="entry name" value="Winged helix-like DNA-binding domain superfamily/Winged helix DNA-binding domain"/>
    <property type="match status" value="1"/>
</dbReference>
<dbReference type="HAMAP" id="MF_00015">
    <property type="entry name" value="LexA"/>
    <property type="match status" value="1"/>
</dbReference>
<dbReference type="InterPro" id="IPR006200">
    <property type="entry name" value="LexA"/>
</dbReference>
<dbReference type="InterPro" id="IPR039418">
    <property type="entry name" value="LexA-like"/>
</dbReference>
<dbReference type="InterPro" id="IPR036286">
    <property type="entry name" value="LexA/Signal_pep-like_sf"/>
</dbReference>
<dbReference type="InterPro" id="IPR006199">
    <property type="entry name" value="LexA_DNA-bd_dom"/>
</dbReference>
<dbReference type="InterPro" id="IPR050077">
    <property type="entry name" value="LexA_repressor"/>
</dbReference>
<dbReference type="InterPro" id="IPR006197">
    <property type="entry name" value="Peptidase_S24_LexA"/>
</dbReference>
<dbReference type="InterPro" id="IPR015927">
    <property type="entry name" value="Peptidase_S24_S26A/B/C"/>
</dbReference>
<dbReference type="InterPro" id="IPR036388">
    <property type="entry name" value="WH-like_DNA-bd_sf"/>
</dbReference>
<dbReference type="InterPro" id="IPR036390">
    <property type="entry name" value="WH_DNA-bd_sf"/>
</dbReference>
<dbReference type="NCBIfam" id="TIGR00498">
    <property type="entry name" value="lexA"/>
    <property type="match status" value="1"/>
</dbReference>
<dbReference type="PANTHER" id="PTHR33516">
    <property type="entry name" value="LEXA REPRESSOR"/>
    <property type="match status" value="1"/>
</dbReference>
<dbReference type="PANTHER" id="PTHR33516:SF2">
    <property type="entry name" value="LEXA REPRESSOR-RELATED"/>
    <property type="match status" value="1"/>
</dbReference>
<dbReference type="Pfam" id="PF01726">
    <property type="entry name" value="LexA_DNA_bind"/>
    <property type="match status" value="1"/>
</dbReference>
<dbReference type="Pfam" id="PF00717">
    <property type="entry name" value="Peptidase_S24"/>
    <property type="match status" value="1"/>
</dbReference>
<dbReference type="PRINTS" id="PR00726">
    <property type="entry name" value="LEXASERPTASE"/>
</dbReference>
<dbReference type="SUPFAM" id="SSF51306">
    <property type="entry name" value="LexA/Signal peptidase"/>
    <property type="match status" value="1"/>
</dbReference>
<dbReference type="SUPFAM" id="SSF46785">
    <property type="entry name" value="Winged helix' DNA-binding domain"/>
    <property type="match status" value="1"/>
</dbReference>
<comment type="function">
    <text evidence="1">Represses a number of genes involved in the response to DNA damage (SOS response), including recA and lexA. In the presence of single-stranded DNA, RecA interacts with LexA causing an autocatalytic cleavage which disrupts the DNA-binding part of LexA, leading to derepression of the SOS regulon and eventually DNA repair.</text>
</comment>
<comment type="catalytic activity">
    <reaction evidence="1">
        <text>Hydrolysis of Ala-|-Gly bond in repressor LexA.</text>
        <dbReference type="EC" id="3.4.21.88"/>
    </reaction>
</comment>
<comment type="subunit">
    <text evidence="1">Homodimer.</text>
</comment>
<comment type="similarity">
    <text evidence="1">Belongs to the peptidase S24 family.</text>
</comment>